<sequence length="233" mass="25995">MMPRLQQHKIILRQLGLQPYAPVSQAMHNFTEFRTDTTPDEIWLVEHQHVFTQGQAGKAEHVLMPGDIPVIQSDRGGQVTYHGPGQQVMYVMVDLKRAKIGVRQLVTAIENTVIETLAHFNIDSHARPDAPGVYVEQQKICSLGLRIRRGCSFHGLALNIAMDLEPFQRINPCGYAGMQMTQVSALQPGVTVADVQPVLVREFTRQLGYPTAKLQPWSLSDYLLSSHSSSSVL</sequence>
<proteinExistence type="inferred from homology"/>
<accession>A4TP08</accession>
<name>LIPB_YERPP</name>
<protein>
    <recommendedName>
        <fullName evidence="1">Octanoyltransferase</fullName>
        <ecNumber evidence="1">2.3.1.181</ecNumber>
    </recommendedName>
    <alternativeName>
        <fullName evidence="1">Lipoate-protein ligase B</fullName>
    </alternativeName>
    <alternativeName>
        <fullName evidence="1">Lipoyl/octanoyl transferase</fullName>
    </alternativeName>
    <alternativeName>
        <fullName evidence="1">Octanoyl-[acyl-carrier-protein]-protein N-octanoyltransferase</fullName>
    </alternativeName>
</protein>
<evidence type="ECO:0000255" key="1">
    <source>
        <dbReference type="HAMAP-Rule" id="MF_00013"/>
    </source>
</evidence>
<evidence type="ECO:0000255" key="2">
    <source>
        <dbReference type="PROSITE-ProRule" id="PRU01067"/>
    </source>
</evidence>
<organism>
    <name type="scientific">Yersinia pestis (strain Pestoides F)</name>
    <dbReference type="NCBI Taxonomy" id="386656"/>
    <lineage>
        <taxon>Bacteria</taxon>
        <taxon>Pseudomonadati</taxon>
        <taxon>Pseudomonadota</taxon>
        <taxon>Gammaproteobacteria</taxon>
        <taxon>Enterobacterales</taxon>
        <taxon>Yersiniaceae</taxon>
        <taxon>Yersinia</taxon>
    </lineage>
</organism>
<reference key="1">
    <citation type="submission" date="2007-02" db="EMBL/GenBank/DDBJ databases">
        <title>Complete sequence of chromosome of Yersinia pestis Pestoides F.</title>
        <authorList>
            <consortium name="US DOE Joint Genome Institute"/>
            <person name="Copeland A."/>
            <person name="Lucas S."/>
            <person name="Lapidus A."/>
            <person name="Barry K."/>
            <person name="Detter J.C."/>
            <person name="Glavina del Rio T."/>
            <person name="Hammon N."/>
            <person name="Israni S."/>
            <person name="Dalin E."/>
            <person name="Tice H."/>
            <person name="Pitluck S."/>
            <person name="Di Bartolo G."/>
            <person name="Chain P."/>
            <person name="Malfatti S."/>
            <person name="Shin M."/>
            <person name="Vergez L."/>
            <person name="Schmutz J."/>
            <person name="Larimer F."/>
            <person name="Land M."/>
            <person name="Hauser L."/>
            <person name="Worsham P."/>
            <person name="Chu M."/>
            <person name="Bearden S."/>
            <person name="Garcia E."/>
            <person name="Richardson P."/>
        </authorList>
    </citation>
    <scope>NUCLEOTIDE SEQUENCE [LARGE SCALE GENOMIC DNA]</scope>
    <source>
        <strain>Pestoides F</strain>
    </source>
</reference>
<dbReference type="EC" id="2.3.1.181" evidence="1"/>
<dbReference type="EMBL" id="CP000668">
    <property type="protein sequence ID" value="ABP41020.1"/>
    <property type="molecule type" value="Genomic_DNA"/>
</dbReference>
<dbReference type="RefSeq" id="WP_002218201.1">
    <property type="nucleotide sequence ID" value="NZ_CP009715.1"/>
</dbReference>
<dbReference type="SMR" id="A4TP08"/>
<dbReference type="GeneID" id="57976096"/>
<dbReference type="KEGG" id="ypp:YPDSF_2654"/>
<dbReference type="UniPathway" id="UPA00538">
    <property type="reaction ID" value="UER00592"/>
</dbReference>
<dbReference type="GO" id="GO:0005737">
    <property type="term" value="C:cytoplasm"/>
    <property type="evidence" value="ECO:0007669"/>
    <property type="project" value="UniProtKB-SubCell"/>
</dbReference>
<dbReference type="GO" id="GO:0033819">
    <property type="term" value="F:lipoyl(octanoyl) transferase activity"/>
    <property type="evidence" value="ECO:0007669"/>
    <property type="project" value="UniProtKB-EC"/>
</dbReference>
<dbReference type="GO" id="GO:0036211">
    <property type="term" value="P:protein modification process"/>
    <property type="evidence" value="ECO:0007669"/>
    <property type="project" value="InterPro"/>
</dbReference>
<dbReference type="CDD" id="cd16444">
    <property type="entry name" value="LipB"/>
    <property type="match status" value="1"/>
</dbReference>
<dbReference type="FunFam" id="3.30.930.10:FF:000020">
    <property type="entry name" value="Octanoyltransferase"/>
    <property type="match status" value="1"/>
</dbReference>
<dbReference type="Gene3D" id="3.30.930.10">
    <property type="entry name" value="Bira Bifunctional Protein, Domain 2"/>
    <property type="match status" value="1"/>
</dbReference>
<dbReference type="HAMAP" id="MF_00013">
    <property type="entry name" value="LipB"/>
    <property type="match status" value="1"/>
</dbReference>
<dbReference type="InterPro" id="IPR045864">
    <property type="entry name" value="aa-tRNA-synth_II/BPL/LPL"/>
</dbReference>
<dbReference type="InterPro" id="IPR004143">
    <property type="entry name" value="BPL_LPL_catalytic"/>
</dbReference>
<dbReference type="InterPro" id="IPR000544">
    <property type="entry name" value="Octanoyltransferase"/>
</dbReference>
<dbReference type="InterPro" id="IPR020605">
    <property type="entry name" value="Octanoyltransferase_CS"/>
</dbReference>
<dbReference type="NCBIfam" id="TIGR00214">
    <property type="entry name" value="lipB"/>
    <property type="match status" value="1"/>
</dbReference>
<dbReference type="NCBIfam" id="NF010922">
    <property type="entry name" value="PRK14342.1"/>
    <property type="match status" value="1"/>
</dbReference>
<dbReference type="PANTHER" id="PTHR10993:SF7">
    <property type="entry name" value="LIPOYLTRANSFERASE 2, MITOCHONDRIAL-RELATED"/>
    <property type="match status" value="1"/>
</dbReference>
<dbReference type="PANTHER" id="PTHR10993">
    <property type="entry name" value="OCTANOYLTRANSFERASE"/>
    <property type="match status" value="1"/>
</dbReference>
<dbReference type="Pfam" id="PF21948">
    <property type="entry name" value="LplA-B_cat"/>
    <property type="match status" value="1"/>
</dbReference>
<dbReference type="PIRSF" id="PIRSF016262">
    <property type="entry name" value="LPLase"/>
    <property type="match status" value="1"/>
</dbReference>
<dbReference type="SUPFAM" id="SSF55681">
    <property type="entry name" value="Class II aaRS and biotin synthetases"/>
    <property type="match status" value="1"/>
</dbReference>
<dbReference type="PROSITE" id="PS51733">
    <property type="entry name" value="BPL_LPL_CATALYTIC"/>
    <property type="match status" value="1"/>
</dbReference>
<dbReference type="PROSITE" id="PS01313">
    <property type="entry name" value="LIPB"/>
    <property type="match status" value="1"/>
</dbReference>
<keyword id="KW-0012">Acyltransferase</keyword>
<keyword id="KW-0963">Cytoplasm</keyword>
<keyword id="KW-0808">Transferase</keyword>
<feature type="chain" id="PRO_1000001147" description="Octanoyltransferase">
    <location>
        <begin position="1"/>
        <end position="233"/>
    </location>
</feature>
<feature type="domain" description="BPL/LPL catalytic" evidence="2">
    <location>
        <begin position="36"/>
        <end position="211"/>
    </location>
</feature>
<feature type="active site" description="Acyl-thioester intermediate" evidence="1">
    <location>
        <position position="173"/>
    </location>
</feature>
<feature type="binding site" evidence="1">
    <location>
        <begin position="75"/>
        <end position="82"/>
    </location>
    <ligand>
        <name>substrate</name>
    </ligand>
</feature>
<feature type="binding site" evidence="1">
    <location>
        <begin position="142"/>
        <end position="144"/>
    </location>
    <ligand>
        <name>substrate</name>
    </ligand>
</feature>
<feature type="binding site" evidence="1">
    <location>
        <begin position="155"/>
        <end position="157"/>
    </location>
    <ligand>
        <name>substrate</name>
    </ligand>
</feature>
<feature type="site" description="Lowers pKa of active site Cys" evidence="1">
    <location>
        <position position="139"/>
    </location>
</feature>
<comment type="function">
    <text evidence="1">Catalyzes the transfer of endogenously produced octanoic acid from octanoyl-acyl-carrier-protein onto the lipoyl domains of lipoate-dependent enzymes. Lipoyl-ACP can also act as a substrate although octanoyl-ACP is likely to be the physiological substrate.</text>
</comment>
<comment type="catalytic activity">
    <reaction evidence="1">
        <text>octanoyl-[ACP] + L-lysyl-[protein] = N(6)-octanoyl-L-lysyl-[protein] + holo-[ACP] + H(+)</text>
        <dbReference type="Rhea" id="RHEA:17665"/>
        <dbReference type="Rhea" id="RHEA-COMP:9636"/>
        <dbReference type="Rhea" id="RHEA-COMP:9685"/>
        <dbReference type="Rhea" id="RHEA-COMP:9752"/>
        <dbReference type="Rhea" id="RHEA-COMP:9928"/>
        <dbReference type="ChEBI" id="CHEBI:15378"/>
        <dbReference type="ChEBI" id="CHEBI:29969"/>
        <dbReference type="ChEBI" id="CHEBI:64479"/>
        <dbReference type="ChEBI" id="CHEBI:78463"/>
        <dbReference type="ChEBI" id="CHEBI:78809"/>
        <dbReference type="EC" id="2.3.1.181"/>
    </reaction>
</comment>
<comment type="pathway">
    <text evidence="1">Protein modification; protein lipoylation via endogenous pathway; protein N(6)-(lipoyl)lysine from octanoyl-[acyl-carrier-protein]: step 1/2.</text>
</comment>
<comment type="subcellular location">
    <subcellularLocation>
        <location evidence="1">Cytoplasm</location>
    </subcellularLocation>
</comment>
<comment type="miscellaneous">
    <text evidence="1">In the reaction, the free carboxyl group of octanoic acid is attached via an amide linkage to the epsilon-amino group of a specific lysine residue of lipoyl domains of lipoate-dependent enzymes.</text>
</comment>
<comment type="similarity">
    <text evidence="1">Belongs to the LipB family.</text>
</comment>
<gene>
    <name evidence="1" type="primary">lipB</name>
    <name type="ordered locus">YPDSF_2654</name>
</gene>